<dbReference type="EC" id="2.1.1.199" evidence="1"/>
<dbReference type="EMBL" id="CP000053">
    <property type="protein sequence ID" value="AAY61755.1"/>
    <property type="molecule type" value="Genomic_DNA"/>
</dbReference>
<dbReference type="SMR" id="Q4UL18"/>
<dbReference type="STRING" id="315456.RF_0904"/>
<dbReference type="KEGG" id="rfe:RF_0904"/>
<dbReference type="eggNOG" id="COG0275">
    <property type="taxonomic scope" value="Bacteria"/>
</dbReference>
<dbReference type="HOGENOM" id="CLU_038422_1_1_5"/>
<dbReference type="OrthoDB" id="9806637at2"/>
<dbReference type="Proteomes" id="UP000008548">
    <property type="component" value="Chromosome"/>
</dbReference>
<dbReference type="GO" id="GO:0005737">
    <property type="term" value="C:cytoplasm"/>
    <property type="evidence" value="ECO:0007669"/>
    <property type="project" value="UniProtKB-SubCell"/>
</dbReference>
<dbReference type="GO" id="GO:0071424">
    <property type="term" value="F:rRNA (cytosine-N4-)-methyltransferase activity"/>
    <property type="evidence" value="ECO:0007669"/>
    <property type="project" value="UniProtKB-UniRule"/>
</dbReference>
<dbReference type="GO" id="GO:0070475">
    <property type="term" value="P:rRNA base methylation"/>
    <property type="evidence" value="ECO:0007669"/>
    <property type="project" value="UniProtKB-UniRule"/>
</dbReference>
<dbReference type="CDD" id="cd02440">
    <property type="entry name" value="AdoMet_MTases"/>
    <property type="match status" value="1"/>
</dbReference>
<dbReference type="FunFam" id="1.10.150.170:FF:000003">
    <property type="entry name" value="Ribosomal RNA small subunit methyltransferase H"/>
    <property type="match status" value="1"/>
</dbReference>
<dbReference type="Gene3D" id="1.10.150.170">
    <property type="entry name" value="Putative methyltransferase TM0872, insert domain"/>
    <property type="match status" value="1"/>
</dbReference>
<dbReference type="Gene3D" id="3.40.50.150">
    <property type="entry name" value="Vaccinia Virus protein VP39"/>
    <property type="match status" value="1"/>
</dbReference>
<dbReference type="HAMAP" id="MF_01007">
    <property type="entry name" value="16SrRNA_methyltr_H"/>
    <property type="match status" value="1"/>
</dbReference>
<dbReference type="InterPro" id="IPR002903">
    <property type="entry name" value="RsmH"/>
</dbReference>
<dbReference type="InterPro" id="IPR023397">
    <property type="entry name" value="SAM-dep_MeTrfase_MraW_recog"/>
</dbReference>
<dbReference type="InterPro" id="IPR029063">
    <property type="entry name" value="SAM-dependent_MTases_sf"/>
</dbReference>
<dbReference type="NCBIfam" id="TIGR00006">
    <property type="entry name" value="16S rRNA (cytosine(1402)-N(4))-methyltransferase RsmH"/>
    <property type="match status" value="1"/>
</dbReference>
<dbReference type="PANTHER" id="PTHR11265:SF0">
    <property type="entry name" value="12S RRNA N4-METHYLCYTIDINE METHYLTRANSFERASE"/>
    <property type="match status" value="1"/>
</dbReference>
<dbReference type="PANTHER" id="PTHR11265">
    <property type="entry name" value="S-ADENOSYL-METHYLTRANSFERASE MRAW"/>
    <property type="match status" value="1"/>
</dbReference>
<dbReference type="Pfam" id="PF01795">
    <property type="entry name" value="Methyltransf_5"/>
    <property type="match status" value="1"/>
</dbReference>
<dbReference type="PIRSF" id="PIRSF004486">
    <property type="entry name" value="MraW"/>
    <property type="match status" value="1"/>
</dbReference>
<dbReference type="SUPFAM" id="SSF81799">
    <property type="entry name" value="Putative methyltransferase TM0872, insert domain"/>
    <property type="match status" value="1"/>
</dbReference>
<dbReference type="SUPFAM" id="SSF53335">
    <property type="entry name" value="S-adenosyl-L-methionine-dependent methyltransferases"/>
    <property type="match status" value="1"/>
</dbReference>
<feature type="chain" id="PRO_0000223562" description="Ribosomal RNA small subunit methyltransferase H">
    <location>
        <begin position="1"/>
        <end position="306"/>
    </location>
</feature>
<feature type="binding site" evidence="1">
    <location>
        <begin position="33"/>
        <end position="35"/>
    </location>
    <ligand>
        <name>S-adenosyl-L-methionine</name>
        <dbReference type="ChEBI" id="CHEBI:59789"/>
    </ligand>
</feature>
<feature type="binding site" evidence="1">
    <location>
        <position position="51"/>
    </location>
    <ligand>
        <name>S-adenosyl-L-methionine</name>
        <dbReference type="ChEBI" id="CHEBI:59789"/>
    </ligand>
</feature>
<feature type="binding site" evidence="1">
    <location>
        <position position="78"/>
    </location>
    <ligand>
        <name>S-adenosyl-L-methionine</name>
        <dbReference type="ChEBI" id="CHEBI:59789"/>
    </ligand>
</feature>
<feature type="binding site" evidence="1">
    <location>
        <position position="96"/>
    </location>
    <ligand>
        <name>S-adenosyl-L-methionine</name>
        <dbReference type="ChEBI" id="CHEBI:59789"/>
    </ligand>
</feature>
<feature type="binding site" evidence="1">
    <location>
        <position position="103"/>
    </location>
    <ligand>
        <name>S-adenosyl-L-methionine</name>
        <dbReference type="ChEBI" id="CHEBI:59789"/>
    </ligand>
</feature>
<gene>
    <name evidence="1" type="primary">rsmH</name>
    <name type="synonym">mraW</name>
    <name type="ordered locus">RF_0904</name>
</gene>
<evidence type="ECO:0000255" key="1">
    <source>
        <dbReference type="HAMAP-Rule" id="MF_01007"/>
    </source>
</evidence>
<protein>
    <recommendedName>
        <fullName evidence="1">Ribosomal RNA small subunit methyltransferase H</fullName>
        <ecNumber evidence="1">2.1.1.199</ecNumber>
    </recommendedName>
    <alternativeName>
        <fullName evidence="1">16S rRNA m(4)C1402 methyltransferase</fullName>
    </alternativeName>
    <alternativeName>
        <fullName evidence="1">rRNA (cytosine-N(4)-)-methyltransferase RsmH</fullName>
    </alternativeName>
</protein>
<keyword id="KW-0963">Cytoplasm</keyword>
<keyword id="KW-0489">Methyltransferase</keyword>
<keyword id="KW-0698">rRNA processing</keyword>
<keyword id="KW-0949">S-adenosyl-L-methionine</keyword>
<keyword id="KW-0808">Transferase</keyword>
<reference key="1">
    <citation type="journal article" date="2005" name="PLoS Biol.">
        <title>The genome sequence of Rickettsia felis identifies the first putative conjugative plasmid in an obligate intracellular parasite.</title>
        <authorList>
            <person name="Ogata H."/>
            <person name="Renesto P."/>
            <person name="Audic S."/>
            <person name="Robert C."/>
            <person name="Blanc G."/>
            <person name="Fournier P.-E."/>
            <person name="Parinello H."/>
            <person name="Claverie J.-M."/>
            <person name="Raoult D."/>
        </authorList>
    </citation>
    <scope>NUCLEOTIDE SEQUENCE [LARGE SCALE GENOMIC DNA]</scope>
    <source>
        <strain>ATCC VR-1525 / URRWXCal2</strain>
    </source>
</reference>
<proteinExistence type="inferred from homology"/>
<sequence length="306" mass="34596">MPQSHIPVMLNEMLANLAPKDGEFYLDCTFGAGGYSKAILESCDCYITALDRDPNVIKKAEEIKQNYGERFDFIETNFADSFAKLKEKKFDGVVLDLGVSSMQLDIADRGFSFLHDGPLDMRMSGQGLSAEEFVNIAEEKELADVIYKYGDESFSRRIAKRIVEYRKTTRIDSTGKLAQIVRSSIGFRKGKIDPATKTFQAIRIYINNELGELERFLANVKNILKKDGRLVVVSFHSLEDRIVKNFFKENSEKPVARSKYAKDDIAIDPDKWLKIITNKALATSDKEVGLNIRARSAKLRAAKKIL</sequence>
<organism>
    <name type="scientific">Rickettsia felis (strain ATCC VR-1525 / URRWXCal2)</name>
    <name type="common">Rickettsia azadi</name>
    <dbReference type="NCBI Taxonomy" id="315456"/>
    <lineage>
        <taxon>Bacteria</taxon>
        <taxon>Pseudomonadati</taxon>
        <taxon>Pseudomonadota</taxon>
        <taxon>Alphaproteobacteria</taxon>
        <taxon>Rickettsiales</taxon>
        <taxon>Rickettsiaceae</taxon>
        <taxon>Rickettsieae</taxon>
        <taxon>Rickettsia</taxon>
        <taxon>spotted fever group</taxon>
    </lineage>
</organism>
<name>RSMH_RICFE</name>
<accession>Q4UL18</accession>
<comment type="function">
    <text evidence="1">Specifically methylates the N4 position of cytidine in position 1402 (C1402) of 16S rRNA.</text>
</comment>
<comment type="catalytic activity">
    <reaction evidence="1">
        <text>cytidine(1402) in 16S rRNA + S-adenosyl-L-methionine = N(4)-methylcytidine(1402) in 16S rRNA + S-adenosyl-L-homocysteine + H(+)</text>
        <dbReference type="Rhea" id="RHEA:42928"/>
        <dbReference type="Rhea" id="RHEA-COMP:10286"/>
        <dbReference type="Rhea" id="RHEA-COMP:10287"/>
        <dbReference type="ChEBI" id="CHEBI:15378"/>
        <dbReference type="ChEBI" id="CHEBI:57856"/>
        <dbReference type="ChEBI" id="CHEBI:59789"/>
        <dbReference type="ChEBI" id="CHEBI:74506"/>
        <dbReference type="ChEBI" id="CHEBI:82748"/>
        <dbReference type="EC" id="2.1.1.199"/>
    </reaction>
</comment>
<comment type="subcellular location">
    <subcellularLocation>
        <location evidence="1">Cytoplasm</location>
    </subcellularLocation>
</comment>
<comment type="similarity">
    <text evidence="1">Belongs to the methyltransferase superfamily. RsmH family.</text>
</comment>